<sequence length="278" mass="30224">MGIKIDGKRLAQDIREELKKQVENINNNEDVKLCMANILVGNDGGSQFYVRNQNKLCHALGIKVKNINLDECIKEEELLNIINELNNDNEVKGIILQLPLPKHLDESKITSAIDINKDIDGLSSISVGKLYKGEKCFVPCTPRGIIELIKTCDIDIEGSNAVVIGRSNIVGKPVAQLLLNENATVTICHSKTKNLKEICLNADILVSAIGKPHFITKDYVKEGAVVIDVGTSSVNGKMVGDVCFDEVIEKAAYVTPVPGGVGAMTTTMLIKNLCEGLK</sequence>
<comment type="function">
    <text evidence="1">Catalyzes the oxidation of 5,10-methylenetetrahydrofolate to 5,10-methenyltetrahydrofolate and then the hydrolysis of 5,10-methenyltetrahydrofolate to 10-formyltetrahydrofolate.</text>
</comment>
<comment type="catalytic activity">
    <reaction evidence="1">
        <text>(6R)-5,10-methylene-5,6,7,8-tetrahydrofolate + NADP(+) = (6R)-5,10-methenyltetrahydrofolate + NADPH</text>
        <dbReference type="Rhea" id="RHEA:22812"/>
        <dbReference type="ChEBI" id="CHEBI:15636"/>
        <dbReference type="ChEBI" id="CHEBI:57455"/>
        <dbReference type="ChEBI" id="CHEBI:57783"/>
        <dbReference type="ChEBI" id="CHEBI:58349"/>
        <dbReference type="EC" id="1.5.1.5"/>
    </reaction>
</comment>
<comment type="catalytic activity">
    <reaction evidence="1">
        <text>(6R)-5,10-methenyltetrahydrofolate + H2O = (6R)-10-formyltetrahydrofolate + H(+)</text>
        <dbReference type="Rhea" id="RHEA:23700"/>
        <dbReference type="ChEBI" id="CHEBI:15377"/>
        <dbReference type="ChEBI" id="CHEBI:15378"/>
        <dbReference type="ChEBI" id="CHEBI:57455"/>
        <dbReference type="ChEBI" id="CHEBI:195366"/>
        <dbReference type="EC" id="3.5.4.9"/>
    </reaction>
</comment>
<comment type="pathway">
    <text evidence="1">One-carbon metabolism; tetrahydrofolate interconversion.</text>
</comment>
<comment type="subunit">
    <text evidence="1">Homodimer.</text>
</comment>
<comment type="similarity">
    <text evidence="1">Belongs to the tetrahydrofolate dehydrogenase/cyclohydrolase family.</text>
</comment>
<keyword id="KW-0028">Amino-acid biosynthesis</keyword>
<keyword id="KW-0368">Histidine biosynthesis</keyword>
<keyword id="KW-0378">Hydrolase</keyword>
<keyword id="KW-0486">Methionine biosynthesis</keyword>
<keyword id="KW-0511">Multifunctional enzyme</keyword>
<keyword id="KW-0521">NADP</keyword>
<keyword id="KW-0554">One-carbon metabolism</keyword>
<keyword id="KW-0560">Oxidoreductase</keyword>
<keyword id="KW-0658">Purine biosynthesis</keyword>
<keyword id="KW-1185">Reference proteome</keyword>
<name>FOLD_CLONN</name>
<reference key="1">
    <citation type="journal article" date="2006" name="Nat. Biotechnol.">
        <title>The genome and transcriptomes of the anti-tumor agent Clostridium novyi-NT.</title>
        <authorList>
            <person name="Bettegowda C."/>
            <person name="Huang X."/>
            <person name="Lin J."/>
            <person name="Cheong I."/>
            <person name="Kohli M."/>
            <person name="Szabo S.A."/>
            <person name="Zhang X."/>
            <person name="Diaz L.A. Jr."/>
            <person name="Velculescu V.E."/>
            <person name="Parmigiani G."/>
            <person name="Kinzler K.W."/>
            <person name="Vogelstein B."/>
            <person name="Zhou S."/>
        </authorList>
    </citation>
    <scope>NUCLEOTIDE SEQUENCE [LARGE SCALE GENOMIC DNA]</scope>
    <source>
        <strain>NT</strain>
    </source>
</reference>
<proteinExistence type="inferred from homology"/>
<evidence type="ECO:0000255" key="1">
    <source>
        <dbReference type="HAMAP-Rule" id="MF_01576"/>
    </source>
</evidence>
<dbReference type="EC" id="1.5.1.5" evidence="1"/>
<dbReference type="EC" id="3.5.4.9" evidence="1"/>
<dbReference type="EMBL" id="CP000382">
    <property type="protein sequence ID" value="ABK61996.1"/>
    <property type="molecule type" value="Genomic_DNA"/>
</dbReference>
<dbReference type="RefSeq" id="WP_011722055.1">
    <property type="nucleotide sequence ID" value="NC_008593.1"/>
</dbReference>
<dbReference type="SMR" id="A0Q0A0"/>
<dbReference type="STRING" id="386415.NT01CX_1979"/>
<dbReference type="KEGG" id="cno:NT01CX_1979"/>
<dbReference type="PATRIC" id="fig|386415.7.peg.1081"/>
<dbReference type="eggNOG" id="COG0190">
    <property type="taxonomic scope" value="Bacteria"/>
</dbReference>
<dbReference type="HOGENOM" id="CLU_034045_2_1_9"/>
<dbReference type="UniPathway" id="UPA00193"/>
<dbReference type="Proteomes" id="UP000008220">
    <property type="component" value="Chromosome"/>
</dbReference>
<dbReference type="GO" id="GO:0005829">
    <property type="term" value="C:cytosol"/>
    <property type="evidence" value="ECO:0007669"/>
    <property type="project" value="TreeGrafter"/>
</dbReference>
<dbReference type="GO" id="GO:0004477">
    <property type="term" value="F:methenyltetrahydrofolate cyclohydrolase activity"/>
    <property type="evidence" value="ECO:0007669"/>
    <property type="project" value="UniProtKB-UniRule"/>
</dbReference>
<dbReference type="GO" id="GO:0004488">
    <property type="term" value="F:methylenetetrahydrofolate dehydrogenase (NADP+) activity"/>
    <property type="evidence" value="ECO:0007669"/>
    <property type="project" value="UniProtKB-UniRule"/>
</dbReference>
<dbReference type="GO" id="GO:0000105">
    <property type="term" value="P:L-histidine biosynthetic process"/>
    <property type="evidence" value="ECO:0007669"/>
    <property type="project" value="UniProtKB-KW"/>
</dbReference>
<dbReference type="GO" id="GO:0009086">
    <property type="term" value="P:methionine biosynthetic process"/>
    <property type="evidence" value="ECO:0007669"/>
    <property type="project" value="UniProtKB-KW"/>
</dbReference>
<dbReference type="GO" id="GO:0006164">
    <property type="term" value="P:purine nucleotide biosynthetic process"/>
    <property type="evidence" value="ECO:0007669"/>
    <property type="project" value="UniProtKB-KW"/>
</dbReference>
<dbReference type="GO" id="GO:0035999">
    <property type="term" value="P:tetrahydrofolate interconversion"/>
    <property type="evidence" value="ECO:0007669"/>
    <property type="project" value="UniProtKB-UniRule"/>
</dbReference>
<dbReference type="CDD" id="cd01080">
    <property type="entry name" value="NAD_bind_m-THF_DH_Cyclohyd"/>
    <property type="match status" value="1"/>
</dbReference>
<dbReference type="FunFam" id="3.40.50.720:FF:000006">
    <property type="entry name" value="Bifunctional protein FolD"/>
    <property type="match status" value="1"/>
</dbReference>
<dbReference type="FunFam" id="3.40.50.10860:FF:000005">
    <property type="entry name" value="C-1-tetrahydrofolate synthase, cytoplasmic, putative"/>
    <property type="match status" value="1"/>
</dbReference>
<dbReference type="Gene3D" id="3.40.50.10860">
    <property type="entry name" value="Leucine Dehydrogenase, chain A, domain 1"/>
    <property type="match status" value="1"/>
</dbReference>
<dbReference type="Gene3D" id="3.40.50.720">
    <property type="entry name" value="NAD(P)-binding Rossmann-like Domain"/>
    <property type="match status" value="1"/>
</dbReference>
<dbReference type="HAMAP" id="MF_01576">
    <property type="entry name" value="THF_DHG_CYH"/>
    <property type="match status" value="1"/>
</dbReference>
<dbReference type="InterPro" id="IPR046346">
    <property type="entry name" value="Aminoacid_DH-like_N_sf"/>
</dbReference>
<dbReference type="InterPro" id="IPR036291">
    <property type="entry name" value="NAD(P)-bd_dom_sf"/>
</dbReference>
<dbReference type="InterPro" id="IPR000672">
    <property type="entry name" value="THF_DH/CycHdrlase"/>
</dbReference>
<dbReference type="InterPro" id="IPR020630">
    <property type="entry name" value="THF_DH/CycHdrlase_cat_dom"/>
</dbReference>
<dbReference type="InterPro" id="IPR020867">
    <property type="entry name" value="THF_DH/CycHdrlase_CS"/>
</dbReference>
<dbReference type="InterPro" id="IPR020631">
    <property type="entry name" value="THF_DH/CycHdrlase_NAD-bd_dom"/>
</dbReference>
<dbReference type="NCBIfam" id="NF010769">
    <property type="entry name" value="PRK14172.1"/>
    <property type="match status" value="1"/>
</dbReference>
<dbReference type="PANTHER" id="PTHR48099:SF5">
    <property type="entry name" value="C-1-TETRAHYDROFOLATE SYNTHASE, CYTOPLASMIC"/>
    <property type="match status" value="1"/>
</dbReference>
<dbReference type="PANTHER" id="PTHR48099">
    <property type="entry name" value="C-1-TETRAHYDROFOLATE SYNTHASE, CYTOPLASMIC-RELATED"/>
    <property type="match status" value="1"/>
</dbReference>
<dbReference type="Pfam" id="PF00763">
    <property type="entry name" value="THF_DHG_CYH"/>
    <property type="match status" value="1"/>
</dbReference>
<dbReference type="Pfam" id="PF02882">
    <property type="entry name" value="THF_DHG_CYH_C"/>
    <property type="match status" value="1"/>
</dbReference>
<dbReference type="PRINTS" id="PR00085">
    <property type="entry name" value="THFDHDRGNASE"/>
</dbReference>
<dbReference type="SUPFAM" id="SSF53223">
    <property type="entry name" value="Aminoacid dehydrogenase-like, N-terminal domain"/>
    <property type="match status" value="1"/>
</dbReference>
<dbReference type="SUPFAM" id="SSF51735">
    <property type="entry name" value="NAD(P)-binding Rossmann-fold domains"/>
    <property type="match status" value="1"/>
</dbReference>
<dbReference type="PROSITE" id="PS00766">
    <property type="entry name" value="THF_DHG_CYH_1"/>
    <property type="match status" value="1"/>
</dbReference>
<organism>
    <name type="scientific">Clostridium novyi (strain NT)</name>
    <dbReference type="NCBI Taxonomy" id="386415"/>
    <lineage>
        <taxon>Bacteria</taxon>
        <taxon>Bacillati</taxon>
        <taxon>Bacillota</taxon>
        <taxon>Clostridia</taxon>
        <taxon>Eubacteriales</taxon>
        <taxon>Clostridiaceae</taxon>
        <taxon>Clostridium</taxon>
    </lineage>
</organism>
<feature type="chain" id="PRO_0000305808" description="Bifunctional protein FolD">
    <location>
        <begin position="1"/>
        <end position="278"/>
    </location>
</feature>
<feature type="binding site" evidence="1">
    <location>
        <begin position="165"/>
        <end position="167"/>
    </location>
    <ligand>
        <name>NADP(+)</name>
        <dbReference type="ChEBI" id="CHEBI:58349"/>
    </ligand>
</feature>
<feature type="binding site" evidence="1">
    <location>
        <position position="190"/>
    </location>
    <ligand>
        <name>NADP(+)</name>
        <dbReference type="ChEBI" id="CHEBI:58349"/>
    </ligand>
</feature>
<feature type="binding site" evidence="1">
    <location>
        <position position="231"/>
    </location>
    <ligand>
        <name>NADP(+)</name>
        <dbReference type="ChEBI" id="CHEBI:58349"/>
    </ligand>
</feature>
<protein>
    <recommendedName>
        <fullName evidence="1">Bifunctional protein FolD</fullName>
    </recommendedName>
    <domain>
        <recommendedName>
            <fullName evidence="1">Methylenetetrahydrofolate dehydrogenase</fullName>
            <ecNumber evidence="1">1.5.1.5</ecNumber>
        </recommendedName>
    </domain>
    <domain>
        <recommendedName>
            <fullName evidence="1">Methenyltetrahydrofolate cyclohydrolase</fullName>
            <ecNumber evidence="1">3.5.4.9</ecNumber>
        </recommendedName>
    </domain>
</protein>
<accession>A0Q0A0</accession>
<gene>
    <name evidence="1" type="primary">folD</name>
    <name type="ordered locus">NT01CX_1979</name>
</gene>